<name>RIHA_PHOPR</name>
<dbReference type="EC" id="3.2.-.-" evidence="1"/>
<dbReference type="EMBL" id="CR378669">
    <property type="protein sequence ID" value="CAG20464.1"/>
    <property type="molecule type" value="Genomic_DNA"/>
</dbReference>
<dbReference type="RefSeq" id="WP_011218759.1">
    <property type="nucleotide sequence ID" value="NC_006370.1"/>
</dbReference>
<dbReference type="SMR" id="Q6LQG2"/>
<dbReference type="STRING" id="298386.PBPRA2062"/>
<dbReference type="KEGG" id="ppr:PBPRA2062"/>
<dbReference type="eggNOG" id="COG1957">
    <property type="taxonomic scope" value="Bacteria"/>
</dbReference>
<dbReference type="HOGENOM" id="CLU_036838_2_0_6"/>
<dbReference type="Proteomes" id="UP000000593">
    <property type="component" value="Chromosome 1"/>
</dbReference>
<dbReference type="GO" id="GO:0005829">
    <property type="term" value="C:cytosol"/>
    <property type="evidence" value="ECO:0007669"/>
    <property type="project" value="TreeGrafter"/>
</dbReference>
<dbReference type="GO" id="GO:0008477">
    <property type="term" value="F:purine nucleosidase activity"/>
    <property type="evidence" value="ECO:0007669"/>
    <property type="project" value="TreeGrafter"/>
</dbReference>
<dbReference type="GO" id="GO:0045437">
    <property type="term" value="F:uridine nucleosidase activity"/>
    <property type="evidence" value="ECO:0007669"/>
    <property type="project" value="InterPro"/>
</dbReference>
<dbReference type="GO" id="GO:0015949">
    <property type="term" value="P:nucleobase-containing small molecule interconversion"/>
    <property type="evidence" value="ECO:0007669"/>
    <property type="project" value="InterPro"/>
</dbReference>
<dbReference type="GO" id="GO:0006152">
    <property type="term" value="P:purine nucleoside catabolic process"/>
    <property type="evidence" value="ECO:0007669"/>
    <property type="project" value="TreeGrafter"/>
</dbReference>
<dbReference type="GO" id="GO:0006206">
    <property type="term" value="P:pyrimidine nucleobase metabolic process"/>
    <property type="evidence" value="ECO:0007669"/>
    <property type="project" value="UniProtKB-UniRule"/>
</dbReference>
<dbReference type="CDD" id="cd02651">
    <property type="entry name" value="nuc_hydro_IU_UC_XIUA"/>
    <property type="match status" value="1"/>
</dbReference>
<dbReference type="FunFam" id="3.90.245.10:FF:000001">
    <property type="entry name" value="Pyrimidine-specific ribonucleoside hydrolase RihA"/>
    <property type="match status" value="1"/>
</dbReference>
<dbReference type="Gene3D" id="3.90.245.10">
    <property type="entry name" value="Ribonucleoside hydrolase-like"/>
    <property type="match status" value="1"/>
</dbReference>
<dbReference type="HAMAP" id="MF_01431">
    <property type="entry name" value="Pyrim_hydro_RihA"/>
    <property type="match status" value="1"/>
</dbReference>
<dbReference type="InterPro" id="IPR015910">
    <property type="entry name" value="I/U_nuclsd_hydro_CS"/>
</dbReference>
<dbReference type="InterPro" id="IPR001910">
    <property type="entry name" value="Inosine/uridine_hydrolase_dom"/>
</dbReference>
<dbReference type="InterPro" id="IPR023186">
    <property type="entry name" value="IUNH"/>
</dbReference>
<dbReference type="InterPro" id="IPR022975">
    <property type="entry name" value="Pyrim_hydro_RihA"/>
</dbReference>
<dbReference type="InterPro" id="IPR036452">
    <property type="entry name" value="Ribo_hydro-like"/>
</dbReference>
<dbReference type="NCBIfam" id="NF007761">
    <property type="entry name" value="PRK10443.1"/>
    <property type="match status" value="1"/>
</dbReference>
<dbReference type="PANTHER" id="PTHR12304">
    <property type="entry name" value="INOSINE-URIDINE PREFERRING NUCLEOSIDE HYDROLASE"/>
    <property type="match status" value="1"/>
</dbReference>
<dbReference type="PANTHER" id="PTHR12304:SF4">
    <property type="entry name" value="URIDINE NUCLEOSIDASE"/>
    <property type="match status" value="1"/>
</dbReference>
<dbReference type="Pfam" id="PF01156">
    <property type="entry name" value="IU_nuc_hydro"/>
    <property type="match status" value="1"/>
</dbReference>
<dbReference type="SUPFAM" id="SSF53590">
    <property type="entry name" value="Nucleoside hydrolase"/>
    <property type="match status" value="1"/>
</dbReference>
<dbReference type="PROSITE" id="PS01247">
    <property type="entry name" value="IUNH"/>
    <property type="match status" value="1"/>
</dbReference>
<feature type="chain" id="PRO_0000206816" description="Pyrimidine-specific ribonucleoside hydrolase RihA">
    <location>
        <begin position="1"/>
        <end position="310"/>
    </location>
</feature>
<feature type="active site" evidence="1">
    <location>
        <position position="240"/>
    </location>
</feature>
<organism>
    <name type="scientific">Photobacterium profundum (strain SS9)</name>
    <dbReference type="NCBI Taxonomy" id="298386"/>
    <lineage>
        <taxon>Bacteria</taxon>
        <taxon>Pseudomonadati</taxon>
        <taxon>Pseudomonadota</taxon>
        <taxon>Gammaproteobacteria</taxon>
        <taxon>Vibrionales</taxon>
        <taxon>Vibrionaceae</taxon>
        <taxon>Photobacterium</taxon>
    </lineage>
</organism>
<evidence type="ECO:0000255" key="1">
    <source>
        <dbReference type="HAMAP-Rule" id="MF_01431"/>
    </source>
</evidence>
<proteinExistence type="inferred from homology"/>
<protein>
    <recommendedName>
        <fullName evidence="1">Pyrimidine-specific ribonucleoside hydrolase RihA</fullName>
        <ecNumber evidence="1">3.2.-.-</ecNumber>
    </recommendedName>
    <alternativeName>
        <fullName evidence="1">Cytidine/uridine-specific hydrolase</fullName>
    </alternativeName>
</protein>
<accession>Q6LQG2</accession>
<gene>
    <name evidence="1" type="primary">rihA</name>
    <name type="ordered locus">PBPRA2062</name>
</gene>
<keyword id="KW-0326">Glycosidase</keyword>
<keyword id="KW-0378">Hydrolase</keyword>
<keyword id="KW-1185">Reference proteome</keyword>
<reference key="1">
    <citation type="journal article" date="2005" name="Science">
        <title>Life at depth: Photobacterium profundum genome sequence and expression analysis.</title>
        <authorList>
            <person name="Vezzi A."/>
            <person name="Campanaro S."/>
            <person name="D'Angelo M."/>
            <person name="Simonato F."/>
            <person name="Vitulo N."/>
            <person name="Lauro F.M."/>
            <person name="Cestaro A."/>
            <person name="Malacrida G."/>
            <person name="Simionati B."/>
            <person name="Cannata N."/>
            <person name="Romualdi C."/>
            <person name="Bartlett D.H."/>
            <person name="Valle G."/>
        </authorList>
    </citation>
    <scope>NUCLEOTIDE SEQUENCE [LARGE SCALE GENOMIC DNA]</scope>
    <source>
        <strain>ATCC BAA-1253 / SS9</strain>
    </source>
</reference>
<sequence length="310" mass="33719">MSRPIIIDCDPGHDDAIALILACASPELDIKAVTTSAGNQTPEKTLHNALRILTLVGRTDIPVAGGALQPLSRELIIADNVHGETGLDGPVLPEPAFEPQPCHAVELMAKILTEATEPVTLVPTGPLTNIALLLATHRELHSQIDSIVLMGGSAEAGNWTPAAEFNIYVDPEAADIVFKSGIPITMCGLDVTHRAQIMDEDIEKIRKINNPVAQVTAELLDFFMIYHRDPKWGFEGAPLHDPCTIAWLLEPELFASINCWVGIETQGSHTLGMTVVDRYQLTDNPINTTVLFDVNRQGFVDLLAERLANY</sequence>
<comment type="function">
    <text evidence="1">Hydrolyzes cytidine or uridine to ribose and cytosine or uracil, respectively.</text>
</comment>
<comment type="similarity">
    <text evidence="1">Belongs to the IUNH family. RihA subfamily.</text>
</comment>